<comment type="function">
    <text evidence="1">F(1)F(0) ATP synthase produces ATP from ADP in the presence of a proton or sodium gradient. F-type ATPases consist of two structural domains, F(1) containing the extramembraneous catalytic core and F(0) containing the membrane proton channel, linked together by a central stalk and a peripheral stalk. During catalysis, ATP synthesis in the catalytic domain of F(1) is coupled via a rotary mechanism of the central stalk subunits to proton translocation.</text>
</comment>
<comment type="function">
    <text evidence="1">This protein is part of the stalk that links CF(0) to CF(1). It either transmits conformational changes from CF(0) to CF(1) or is implicated in proton conduction.</text>
</comment>
<comment type="subunit">
    <text evidence="1">F-type ATPases have 2 components, F(1) - the catalytic core - and F(0) - the membrane proton channel. F(1) has five subunits: alpha(3), beta(3), gamma(1), delta(1), epsilon(1). F(0) has three main subunits: a(1), b(2) and c(10-14). The alpha and beta chains form an alternating ring which encloses part of the gamma chain. F(1) is attached to F(0) by a central stalk formed by the gamma and epsilon chains, while a peripheral stalk is formed by the delta and b chains.</text>
</comment>
<comment type="subcellular location">
    <subcellularLocation>
        <location evidence="1">Cell membrane</location>
        <topology evidence="1">Peripheral membrane protein</topology>
    </subcellularLocation>
</comment>
<comment type="similarity">
    <text evidence="1">Belongs to the ATPase delta chain family.</text>
</comment>
<dbReference type="EMBL" id="CP000414">
    <property type="protein sequence ID" value="ABJ62946.1"/>
    <property type="molecule type" value="Genomic_DNA"/>
</dbReference>
<dbReference type="RefSeq" id="WP_011680435.1">
    <property type="nucleotide sequence ID" value="NC_008531.1"/>
</dbReference>
<dbReference type="SMR" id="Q03V26"/>
<dbReference type="EnsemblBacteria" id="ABJ62946">
    <property type="protein sequence ID" value="ABJ62946"/>
    <property type="gene ID" value="LEUM_1872"/>
</dbReference>
<dbReference type="GeneID" id="29577628"/>
<dbReference type="KEGG" id="lme:LEUM_1872"/>
<dbReference type="eggNOG" id="COG0712">
    <property type="taxonomic scope" value="Bacteria"/>
</dbReference>
<dbReference type="HOGENOM" id="CLU_085114_4_1_9"/>
<dbReference type="Proteomes" id="UP000000362">
    <property type="component" value="Chromosome"/>
</dbReference>
<dbReference type="GO" id="GO:0005886">
    <property type="term" value="C:plasma membrane"/>
    <property type="evidence" value="ECO:0007669"/>
    <property type="project" value="UniProtKB-SubCell"/>
</dbReference>
<dbReference type="GO" id="GO:0045259">
    <property type="term" value="C:proton-transporting ATP synthase complex"/>
    <property type="evidence" value="ECO:0007669"/>
    <property type="project" value="UniProtKB-KW"/>
</dbReference>
<dbReference type="GO" id="GO:0046933">
    <property type="term" value="F:proton-transporting ATP synthase activity, rotational mechanism"/>
    <property type="evidence" value="ECO:0007669"/>
    <property type="project" value="UniProtKB-UniRule"/>
</dbReference>
<dbReference type="Gene3D" id="1.10.520.20">
    <property type="entry name" value="N-terminal domain of the delta subunit of the F1F0-ATP synthase"/>
    <property type="match status" value="1"/>
</dbReference>
<dbReference type="HAMAP" id="MF_01416">
    <property type="entry name" value="ATP_synth_delta_bact"/>
    <property type="match status" value="1"/>
</dbReference>
<dbReference type="InterPro" id="IPR026015">
    <property type="entry name" value="ATP_synth_OSCP/delta_N_sf"/>
</dbReference>
<dbReference type="InterPro" id="IPR000711">
    <property type="entry name" value="ATPase_OSCP/dsu"/>
</dbReference>
<dbReference type="NCBIfam" id="TIGR01145">
    <property type="entry name" value="ATP_synt_delta"/>
    <property type="match status" value="1"/>
</dbReference>
<dbReference type="PANTHER" id="PTHR11910">
    <property type="entry name" value="ATP SYNTHASE DELTA CHAIN"/>
    <property type="match status" value="1"/>
</dbReference>
<dbReference type="Pfam" id="PF00213">
    <property type="entry name" value="OSCP"/>
    <property type="match status" value="1"/>
</dbReference>
<dbReference type="PRINTS" id="PR00125">
    <property type="entry name" value="ATPASEDELTA"/>
</dbReference>
<dbReference type="SUPFAM" id="SSF47928">
    <property type="entry name" value="N-terminal domain of the delta subunit of the F1F0-ATP synthase"/>
    <property type="match status" value="1"/>
</dbReference>
<accession>Q03V26</accession>
<gene>
    <name evidence="1" type="primary">atpH</name>
    <name type="ordered locus">LEUM_1872</name>
</gene>
<keyword id="KW-0066">ATP synthesis</keyword>
<keyword id="KW-1003">Cell membrane</keyword>
<keyword id="KW-0139">CF(1)</keyword>
<keyword id="KW-0375">Hydrogen ion transport</keyword>
<keyword id="KW-0406">Ion transport</keyword>
<keyword id="KW-0472">Membrane</keyword>
<keyword id="KW-1185">Reference proteome</keyword>
<keyword id="KW-0813">Transport</keyword>
<name>ATPD_LEUMM</name>
<feature type="chain" id="PRO_1000184746" description="ATP synthase subunit delta">
    <location>
        <begin position="1"/>
        <end position="180"/>
    </location>
</feature>
<sequence>MAKNIKDIANQYAKAIFELAGEQDNVDEVLTDLRTIKTVLDENQNFITIASSADVAIASRDDLLKTLTGNSTDSVKNLVKLLQVNNRLNILSIVVDEFVSQYNEVNGIVDVQATTAVALDDGRLDKLASVFASKTGAQQVNIENVVDESILGGVILQSQSTLIDGSLQTKIAKMKAQLLG</sequence>
<evidence type="ECO:0000255" key="1">
    <source>
        <dbReference type="HAMAP-Rule" id="MF_01416"/>
    </source>
</evidence>
<proteinExistence type="inferred from homology"/>
<organism>
    <name type="scientific">Leuconostoc mesenteroides subsp. mesenteroides (strain ATCC 8293 / DSM 20343 / BCRC 11652 / CCM 1803 / JCM 6124 / NCDO 523 / NBRC 100496 / NCIMB 8023 / NCTC 12954 / NRRL B-1118 / 37Y)</name>
    <dbReference type="NCBI Taxonomy" id="203120"/>
    <lineage>
        <taxon>Bacteria</taxon>
        <taxon>Bacillati</taxon>
        <taxon>Bacillota</taxon>
        <taxon>Bacilli</taxon>
        <taxon>Lactobacillales</taxon>
        <taxon>Lactobacillaceae</taxon>
        <taxon>Leuconostoc</taxon>
    </lineage>
</organism>
<protein>
    <recommendedName>
        <fullName evidence="1">ATP synthase subunit delta</fullName>
    </recommendedName>
    <alternativeName>
        <fullName evidence="1">ATP synthase F(1) sector subunit delta</fullName>
    </alternativeName>
    <alternativeName>
        <fullName evidence="1">F-type ATPase subunit delta</fullName>
        <shortName evidence="1">F-ATPase subunit delta</shortName>
    </alternativeName>
</protein>
<reference key="1">
    <citation type="journal article" date="2006" name="Proc. Natl. Acad. Sci. U.S.A.">
        <title>Comparative genomics of the lactic acid bacteria.</title>
        <authorList>
            <person name="Makarova K.S."/>
            <person name="Slesarev A."/>
            <person name="Wolf Y.I."/>
            <person name="Sorokin A."/>
            <person name="Mirkin B."/>
            <person name="Koonin E.V."/>
            <person name="Pavlov A."/>
            <person name="Pavlova N."/>
            <person name="Karamychev V."/>
            <person name="Polouchine N."/>
            <person name="Shakhova V."/>
            <person name="Grigoriev I."/>
            <person name="Lou Y."/>
            <person name="Rohksar D."/>
            <person name="Lucas S."/>
            <person name="Huang K."/>
            <person name="Goodstein D.M."/>
            <person name="Hawkins T."/>
            <person name="Plengvidhya V."/>
            <person name="Welker D."/>
            <person name="Hughes J."/>
            <person name="Goh Y."/>
            <person name="Benson A."/>
            <person name="Baldwin K."/>
            <person name="Lee J.-H."/>
            <person name="Diaz-Muniz I."/>
            <person name="Dosti B."/>
            <person name="Smeianov V."/>
            <person name="Wechter W."/>
            <person name="Barabote R."/>
            <person name="Lorca G."/>
            <person name="Altermann E."/>
            <person name="Barrangou R."/>
            <person name="Ganesan B."/>
            <person name="Xie Y."/>
            <person name="Rawsthorne H."/>
            <person name="Tamir D."/>
            <person name="Parker C."/>
            <person name="Breidt F."/>
            <person name="Broadbent J.R."/>
            <person name="Hutkins R."/>
            <person name="O'Sullivan D."/>
            <person name="Steele J."/>
            <person name="Unlu G."/>
            <person name="Saier M.H. Jr."/>
            <person name="Klaenhammer T."/>
            <person name="Richardson P."/>
            <person name="Kozyavkin S."/>
            <person name="Weimer B.C."/>
            <person name="Mills D.A."/>
        </authorList>
    </citation>
    <scope>NUCLEOTIDE SEQUENCE [LARGE SCALE GENOMIC DNA]</scope>
    <source>
        <strain>ATCC 8293 / DSM 20343 / BCRC 11652 / CCM 1803 / JCM 6124 / NCDO 523 / NBRC 100496 / NCIMB 8023 / NCTC 12954 / NRRL B-1118 / 37Y</strain>
    </source>
</reference>